<geneLocation type="non-photosynthetic plastid"/>
<protein>
    <recommendedName>
        <fullName evidence="1">Large ribosomal subunit protein bL36c</fullName>
    </recommendedName>
    <alternativeName>
        <fullName evidence="2">50S ribosomal protein L36, plastid</fullName>
    </alternativeName>
</protein>
<feature type="chain" id="PRO_0000293970" description="Large ribosomal subunit protein bL36c">
    <location>
        <begin position="1"/>
        <end position="37"/>
    </location>
</feature>
<dbReference type="EMBL" id="DQ398104">
    <property type="protein sequence ID" value="ABD33977.1"/>
    <property type="molecule type" value="Genomic_DNA"/>
</dbReference>
<dbReference type="RefSeq" id="YP_635929.1">
    <property type="nucleotide sequence ID" value="NC_008100.1"/>
</dbReference>
<dbReference type="SMR" id="Q2EEW5"/>
<dbReference type="GeneID" id="4100423"/>
<dbReference type="GO" id="GO:0009536">
    <property type="term" value="C:plastid"/>
    <property type="evidence" value="ECO:0007669"/>
    <property type="project" value="UniProtKB-SubCell"/>
</dbReference>
<dbReference type="GO" id="GO:1990904">
    <property type="term" value="C:ribonucleoprotein complex"/>
    <property type="evidence" value="ECO:0007669"/>
    <property type="project" value="UniProtKB-KW"/>
</dbReference>
<dbReference type="GO" id="GO:0005840">
    <property type="term" value="C:ribosome"/>
    <property type="evidence" value="ECO:0007669"/>
    <property type="project" value="UniProtKB-KW"/>
</dbReference>
<dbReference type="GO" id="GO:0003735">
    <property type="term" value="F:structural constituent of ribosome"/>
    <property type="evidence" value="ECO:0007669"/>
    <property type="project" value="InterPro"/>
</dbReference>
<dbReference type="GO" id="GO:0006412">
    <property type="term" value="P:translation"/>
    <property type="evidence" value="ECO:0007669"/>
    <property type="project" value="InterPro"/>
</dbReference>
<dbReference type="HAMAP" id="MF_00251">
    <property type="entry name" value="Ribosomal_bL36"/>
    <property type="match status" value="1"/>
</dbReference>
<dbReference type="InterPro" id="IPR000473">
    <property type="entry name" value="Ribosomal_bL36"/>
</dbReference>
<dbReference type="InterPro" id="IPR035977">
    <property type="entry name" value="Ribosomal_bL36_sp"/>
</dbReference>
<dbReference type="NCBIfam" id="TIGR01022">
    <property type="entry name" value="rpmJ_bact"/>
    <property type="match status" value="1"/>
</dbReference>
<dbReference type="PANTHER" id="PTHR42888">
    <property type="entry name" value="50S RIBOSOMAL PROTEIN L36, CHLOROPLASTIC"/>
    <property type="match status" value="1"/>
</dbReference>
<dbReference type="PANTHER" id="PTHR42888:SF1">
    <property type="entry name" value="LARGE RIBOSOMAL SUBUNIT PROTEIN BL36C"/>
    <property type="match status" value="1"/>
</dbReference>
<dbReference type="Pfam" id="PF00444">
    <property type="entry name" value="Ribosomal_L36"/>
    <property type="match status" value="1"/>
</dbReference>
<dbReference type="SUPFAM" id="SSF57840">
    <property type="entry name" value="Ribosomal protein L36"/>
    <property type="match status" value="1"/>
</dbReference>
<dbReference type="PROSITE" id="PS00828">
    <property type="entry name" value="RIBOSOMAL_L36"/>
    <property type="match status" value="1"/>
</dbReference>
<organism>
    <name type="scientific">Helicosporidium sp. subsp. Simulium jonesii</name>
    <name type="common">Green alga</name>
    <dbReference type="NCBI Taxonomy" id="145475"/>
    <lineage>
        <taxon>Eukaryota</taxon>
        <taxon>Viridiplantae</taxon>
        <taxon>Chlorophyta</taxon>
        <taxon>core chlorophytes</taxon>
        <taxon>Trebouxiophyceae</taxon>
        <taxon>Chlorellales</taxon>
        <taxon>Chlorellaceae</taxon>
        <taxon>Helicosporidium</taxon>
    </lineage>
</organism>
<gene>
    <name evidence="1" type="primary">rpl36</name>
</gene>
<proteinExistence type="inferred from homology"/>
<accession>Q2EEW5</accession>
<keyword id="KW-0934">Plastid</keyword>
<keyword id="KW-0687">Ribonucleoprotein</keyword>
<keyword id="KW-0689">Ribosomal protein</keyword>
<name>RK36_HELSJ</name>
<comment type="subcellular location">
    <subcellularLocation>
        <location>Plastid</location>
    </subcellularLocation>
</comment>
<comment type="similarity">
    <text evidence="1">Belongs to the bacterial ribosomal protein bL36 family.</text>
</comment>
<reference key="1">
    <citation type="journal article" date="2006" name="BMC Biol.">
        <title>The complete plastid genome sequence of the parasitic green alga, Helicosporidium sp. is highly reduced and structured.</title>
        <authorList>
            <person name="de Koning A.P."/>
            <person name="Keeling P.J."/>
        </authorList>
    </citation>
    <scope>NUCLEOTIDE SEQUENCE [LARGE SCALE GENOMIC DNA]</scope>
</reference>
<sequence length="37" mass="4497">MKVYPSIRIMCNKCRIIRRKGIIRVICPNSKHKQRQK</sequence>
<evidence type="ECO:0000255" key="1">
    <source>
        <dbReference type="HAMAP-Rule" id="MF_00251"/>
    </source>
</evidence>
<evidence type="ECO:0000305" key="2"/>